<comment type="similarity">
    <text evidence="1">Belongs to the bacterial ribosomal protein bS21 family.</text>
</comment>
<organism>
    <name type="scientific">Geobacter sp. (strain M21)</name>
    <dbReference type="NCBI Taxonomy" id="443144"/>
    <lineage>
        <taxon>Bacteria</taxon>
        <taxon>Pseudomonadati</taxon>
        <taxon>Thermodesulfobacteriota</taxon>
        <taxon>Desulfuromonadia</taxon>
        <taxon>Geobacterales</taxon>
        <taxon>Geobacteraceae</taxon>
        <taxon>Geobacter</taxon>
    </lineage>
</organism>
<evidence type="ECO:0000255" key="1">
    <source>
        <dbReference type="HAMAP-Rule" id="MF_00358"/>
    </source>
</evidence>
<evidence type="ECO:0000305" key="2"/>
<gene>
    <name evidence="1" type="primary">rpsU</name>
    <name type="ordered locus">GM21_3793</name>
</gene>
<name>RS21_GEOSM</name>
<protein>
    <recommendedName>
        <fullName evidence="1">Small ribosomal subunit protein bS21</fullName>
    </recommendedName>
    <alternativeName>
        <fullName evidence="2">30S ribosomal protein S21</fullName>
    </alternativeName>
</protein>
<sequence length="65" mass="7607">MPGVKVKEAEPFELALKKFKKQCEKAGILSEVRKREHYEKPSIKKKKKAIAARKRALKKQRKMVD</sequence>
<keyword id="KW-0687">Ribonucleoprotein</keyword>
<keyword id="KW-0689">Ribosomal protein</keyword>
<reference key="1">
    <citation type="submission" date="2009-07" db="EMBL/GenBank/DDBJ databases">
        <title>Complete sequence of Geobacter sp. M21.</title>
        <authorList>
            <consortium name="US DOE Joint Genome Institute"/>
            <person name="Lucas S."/>
            <person name="Copeland A."/>
            <person name="Lapidus A."/>
            <person name="Glavina del Rio T."/>
            <person name="Dalin E."/>
            <person name="Tice H."/>
            <person name="Bruce D."/>
            <person name="Goodwin L."/>
            <person name="Pitluck S."/>
            <person name="Saunders E."/>
            <person name="Brettin T."/>
            <person name="Detter J.C."/>
            <person name="Han C."/>
            <person name="Larimer F."/>
            <person name="Land M."/>
            <person name="Hauser L."/>
            <person name="Kyrpides N."/>
            <person name="Ovchinnikova G."/>
            <person name="Lovley D."/>
        </authorList>
    </citation>
    <scope>NUCLEOTIDE SEQUENCE [LARGE SCALE GENOMIC DNA]</scope>
    <source>
        <strain>M21</strain>
    </source>
</reference>
<accession>C6E7F2</accession>
<proteinExistence type="inferred from homology"/>
<feature type="chain" id="PRO_1000205370" description="Small ribosomal subunit protein bS21">
    <location>
        <begin position="1"/>
        <end position="65"/>
    </location>
</feature>
<dbReference type="EMBL" id="CP001661">
    <property type="protein sequence ID" value="ACT19812.1"/>
    <property type="molecule type" value="Genomic_DNA"/>
</dbReference>
<dbReference type="SMR" id="C6E7F2"/>
<dbReference type="STRING" id="443144.GM21_3793"/>
<dbReference type="KEGG" id="gem:GM21_3793"/>
<dbReference type="eggNOG" id="COG0828">
    <property type="taxonomic scope" value="Bacteria"/>
</dbReference>
<dbReference type="HOGENOM" id="CLU_159258_1_2_7"/>
<dbReference type="OrthoDB" id="9799244at2"/>
<dbReference type="GO" id="GO:1990904">
    <property type="term" value="C:ribonucleoprotein complex"/>
    <property type="evidence" value="ECO:0007669"/>
    <property type="project" value="UniProtKB-KW"/>
</dbReference>
<dbReference type="GO" id="GO:0005840">
    <property type="term" value="C:ribosome"/>
    <property type="evidence" value="ECO:0007669"/>
    <property type="project" value="UniProtKB-KW"/>
</dbReference>
<dbReference type="GO" id="GO:0003735">
    <property type="term" value="F:structural constituent of ribosome"/>
    <property type="evidence" value="ECO:0007669"/>
    <property type="project" value="InterPro"/>
</dbReference>
<dbReference type="GO" id="GO:0006412">
    <property type="term" value="P:translation"/>
    <property type="evidence" value="ECO:0007669"/>
    <property type="project" value="UniProtKB-UniRule"/>
</dbReference>
<dbReference type="Gene3D" id="1.20.5.1150">
    <property type="entry name" value="Ribosomal protein S8"/>
    <property type="match status" value="1"/>
</dbReference>
<dbReference type="HAMAP" id="MF_00358">
    <property type="entry name" value="Ribosomal_bS21"/>
    <property type="match status" value="1"/>
</dbReference>
<dbReference type="InterPro" id="IPR001911">
    <property type="entry name" value="Ribosomal_bS21"/>
</dbReference>
<dbReference type="InterPro" id="IPR038380">
    <property type="entry name" value="Ribosomal_bS21_sf"/>
</dbReference>
<dbReference type="NCBIfam" id="TIGR00030">
    <property type="entry name" value="S21p"/>
    <property type="match status" value="1"/>
</dbReference>
<dbReference type="PANTHER" id="PTHR21109">
    <property type="entry name" value="MITOCHONDRIAL 28S RIBOSOMAL PROTEIN S21"/>
    <property type="match status" value="1"/>
</dbReference>
<dbReference type="PANTHER" id="PTHR21109:SF22">
    <property type="entry name" value="SMALL RIBOSOMAL SUBUNIT PROTEIN BS21"/>
    <property type="match status" value="1"/>
</dbReference>
<dbReference type="Pfam" id="PF01165">
    <property type="entry name" value="Ribosomal_S21"/>
    <property type="match status" value="1"/>
</dbReference>
<dbReference type="PRINTS" id="PR00976">
    <property type="entry name" value="RIBOSOMALS21"/>
</dbReference>